<feature type="chain" id="PRO_1000198161" description="Trigger factor">
    <location>
        <begin position="1"/>
        <end position="429"/>
    </location>
</feature>
<feature type="domain" description="PPIase FKBP-type" evidence="1">
    <location>
        <begin position="163"/>
        <end position="248"/>
    </location>
</feature>
<protein>
    <recommendedName>
        <fullName evidence="1">Trigger factor</fullName>
        <shortName evidence="1">TF</shortName>
        <ecNumber evidence="1">5.2.1.8</ecNumber>
    </recommendedName>
    <alternativeName>
        <fullName evidence="1">PPIase</fullName>
    </alternativeName>
</protein>
<comment type="function">
    <text evidence="1">Involved in protein export. Acts as a chaperone by maintaining the newly synthesized protein in an open conformation. Functions as a peptidyl-prolyl cis-trans isomerase.</text>
</comment>
<comment type="catalytic activity">
    <reaction evidence="1">
        <text>[protein]-peptidylproline (omega=180) = [protein]-peptidylproline (omega=0)</text>
        <dbReference type="Rhea" id="RHEA:16237"/>
        <dbReference type="Rhea" id="RHEA-COMP:10747"/>
        <dbReference type="Rhea" id="RHEA-COMP:10748"/>
        <dbReference type="ChEBI" id="CHEBI:83833"/>
        <dbReference type="ChEBI" id="CHEBI:83834"/>
        <dbReference type="EC" id="5.2.1.8"/>
    </reaction>
</comment>
<comment type="subcellular location">
    <subcellularLocation>
        <location>Cytoplasm</location>
    </subcellularLocation>
    <text evidence="1">About half TF is bound to the ribosome near the polypeptide exit tunnel while the other half is free in the cytoplasm.</text>
</comment>
<comment type="domain">
    <text evidence="1">Consists of 3 domains; the N-terminus binds the ribosome, the middle domain has PPIase activity, while the C-terminus has intrinsic chaperone activity on its own.</text>
</comment>
<comment type="similarity">
    <text evidence="1">Belongs to the FKBP-type PPIase family. Tig subfamily.</text>
</comment>
<gene>
    <name evidence="1" type="primary">tig</name>
    <name type="ordered locus">Hore_14950</name>
</gene>
<keyword id="KW-0131">Cell cycle</keyword>
<keyword id="KW-0132">Cell division</keyword>
<keyword id="KW-0143">Chaperone</keyword>
<keyword id="KW-0963">Cytoplasm</keyword>
<keyword id="KW-0413">Isomerase</keyword>
<keyword id="KW-1185">Reference proteome</keyword>
<keyword id="KW-0697">Rotamase</keyword>
<sequence>MEVKKEQLEGNKVELKVEIEPERVDKALEQAYRKVVKNVSIPGFRKGKVPRRVLEARYGKEVLHRDAFDILVPPAYQEAVQAAEIEPIDRPEITDFYIEENKPATFSAVVEVKPEVELGEYKGLGIEKDEVEVTEEDIEAQLKSLQEQHSQLKSTDKEVVEEGDFVVIDFVGTIDGEEFQGGSAEEYNLEVGSGTFIPGFEEQLVGKKVGEETEVEVTFPEDYQAEDLAGKDAVFKVDIKEIKVKETPELDDEFAKEASEFDTLEELKDDIKERLTSQKEDRARRKLEDEIVDRVTENAEVDVPETLVNNELDMMYQNLAYSISSYGMKVEDYLKSMGLDEESWREENREEAEKRAKSNLVLEAIGKKEGIEVTDEEIDNKIEEIAKDGEQKPEQIKAYLQLQGQLEGLKHTIFVRKVIDFLVEHNQND</sequence>
<evidence type="ECO:0000255" key="1">
    <source>
        <dbReference type="HAMAP-Rule" id="MF_00303"/>
    </source>
</evidence>
<accession>B8CY75</accession>
<reference key="1">
    <citation type="journal article" date="2009" name="PLoS ONE">
        <title>Genome analysis of the anaerobic thermohalophilic bacterium Halothermothrix orenii.</title>
        <authorList>
            <person name="Mavromatis K."/>
            <person name="Ivanova N."/>
            <person name="Anderson I."/>
            <person name="Lykidis A."/>
            <person name="Hooper S.D."/>
            <person name="Sun H."/>
            <person name="Kunin V."/>
            <person name="Lapidus A."/>
            <person name="Hugenholtz P."/>
            <person name="Patel B."/>
            <person name="Kyrpides N.C."/>
        </authorList>
    </citation>
    <scope>NUCLEOTIDE SEQUENCE [LARGE SCALE GENOMIC DNA]</scope>
    <source>
        <strain>H 168 / OCM 544 / DSM 9562</strain>
    </source>
</reference>
<organism>
    <name type="scientific">Halothermothrix orenii (strain H 168 / OCM 544 / DSM 9562)</name>
    <dbReference type="NCBI Taxonomy" id="373903"/>
    <lineage>
        <taxon>Bacteria</taxon>
        <taxon>Bacillati</taxon>
        <taxon>Bacillota</taxon>
        <taxon>Clostridia</taxon>
        <taxon>Halanaerobiales</taxon>
        <taxon>Halothermotrichaceae</taxon>
        <taxon>Halothermothrix</taxon>
    </lineage>
</organism>
<proteinExistence type="inferred from homology"/>
<dbReference type="EC" id="5.2.1.8" evidence="1"/>
<dbReference type="EMBL" id="CP001098">
    <property type="protein sequence ID" value="ACL70244.1"/>
    <property type="molecule type" value="Genomic_DNA"/>
</dbReference>
<dbReference type="RefSeq" id="WP_012636427.1">
    <property type="nucleotide sequence ID" value="NC_011899.1"/>
</dbReference>
<dbReference type="SMR" id="B8CY75"/>
<dbReference type="STRING" id="373903.Hore_14950"/>
<dbReference type="KEGG" id="hor:Hore_14950"/>
<dbReference type="eggNOG" id="COG0544">
    <property type="taxonomic scope" value="Bacteria"/>
</dbReference>
<dbReference type="HOGENOM" id="CLU_033058_3_2_9"/>
<dbReference type="OrthoDB" id="9767721at2"/>
<dbReference type="Proteomes" id="UP000000719">
    <property type="component" value="Chromosome"/>
</dbReference>
<dbReference type="GO" id="GO:0005737">
    <property type="term" value="C:cytoplasm"/>
    <property type="evidence" value="ECO:0007669"/>
    <property type="project" value="UniProtKB-SubCell"/>
</dbReference>
<dbReference type="GO" id="GO:0003755">
    <property type="term" value="F:peptidyl-prolyl cis-trans isomerase activity"/>
    <property type="evidence" value="ECO:0007669"/>
    <property type="project" value="UniProtKB-UniRule"/>
</dbReference>
<dbReference type="GO" id="GO:0044183">
    <property type="term" value="F:protein folding chaperone"/>
    <property type="evidence" value="ECO:0007669"/>
    <property type="project" value="TreeGrafter"/>
</dbReference>
<dbReference type="GO" id="GO:0043022">
    <property type="term" value="F:ribosome binding"/>
    <property type="evidence" value="ECO:0007669"/>
    <property type="project" value="TreeGrafter"/>
</dbReference>
<dbReference type="GO" id="GO:0051083">
    <property type="term" value="P:'de novo' cotranslational protein folding"/>
    <property type="evidence" value="ECO:0007669"/>
    <property type="project" value="TreeGrafter"/>
</dbReference>
<dbReference type="GO" id="GO:0051301">
    <property type="term" value="P:cell division"/>
    <property type="evidence" value="ECO:0007669"/>
    <property type="project" value="UniProtKB-KW"/>
</dbReference>
<dbReference type="GO" id="GO:0061077">
    <property type="term" value="P:chaperone-mediated protein folding"/>
    <property type="evidence" value="ECO:0007669"/>
    <property type="project" value="TreeGrafter"/>
</dbReference>
<dbReference type="GO" id="GO:0015031">
    <property type="term" value="P:protein transport"/>
    <property type="evidence" value="ECO:0007669"/>
    <property type="project" value="UniProtKB-UniRule"/>
</dbReference>
<dbReference type="GO" id="GO:0043335">
    <property type="term" value="P:protein unfolding"/>
    <property type="evidence" value="ECO:0007669"/>
    <property type="project" value="TreeGrafter"/>
</dbReference>
<dbReference type="FunFam" id="3.10.50.40:FF:000001">
    <property type="entry name" value="Trigger factor"/>
    <property type="match status" value="1"/>
</dbReference>
<dbReference type="Gene3D" id="3.10.50.40">
    <property type="match status" value="1"/>
</dbReference>
<dbReference type="Gene3D" id="3.30.70.1050">
    <property type="entry name" value="Trigger factor ribosome-binding domain"/>
    <property type="match status" value="1"/>
</dbReference>
<dbReference type="Gene3D" id="1.10.3120.10">
    <property type="entry name" value="Trigger factor, C-terminal domain"/>
    <property type="match status" value="1"/>
</dbReference>
<dbReference type="HAMAP" id="MF_00303">
    <property type="entry name" value="Trigger_factor_Tig"/>
    <property type="match status" value="1"/>
</dbReference>
<dbReference type="InterPro" id="IPR046357">
    <property type="entry name" value="PPIase_dom_sf"/>
</dbReference>
<dbReference type="InterPro" id="IPR001179">
    <property type="entry name" value="PPIase_FKBP_dom"/>
</dbReference>
<dbReference type="InterPro" id="IPR005215">
    <property type="entry name" value="Trig_fac"/>
</dbReference>
<dbReference type="InterPro" id="IPR008880">
    <property type="entry name" value="Trigger_fac_C"/>
</dbReference>
<dbReference type="InterPro" id="IPR037041">
    <property type="entry name" value="Trigger_fac_C_sf"/>
</dbReference>
<dbReference type="InterPro" id="IPR008881">
    <property type="entry name" value="Trigger_fac_ribosome-bd_bac"/>
</dbReference>
<dbReference type="InterPro" id="IPR036611">
    <property type="entry name" value="Trigger_fac_ribosome-bd_sf"/>
</dbReference>
<dbReference type="InterPro" id="IPR027304">
    <property type="entry name" value="Trigger_fact/SurA_dom_sf"/>
</dbReference>
<dbReference type="NCBIfam" id="TIGR00115">
    <property type="entry name" value="tig"/>
    <property type="match status" value="1"/>
</dbReference>
<dbReference type="PANTHER" id="PTHR30560">
    <property type="entry name" value="TRIGGER FACTOR CHAPERONE AND PEPTIDYL-PROLYL CIS/TRANS ISOMERASE"/>
    <property type="match status" value="1"/>
</dbReference>
<dbReference type="PANTHER" id="PTHR30560:SF3">
    <property type="entry name" value="TRIGGER FACTOR-LIKE PROTEIN TIG, CHLOROPLASTIC"/>
    <property type="match status" value="1"/>
</dbReference>
<dbReference type="Pfam" id="PF00254">
    <property type="entry name" value="FKBP_C"/>
    <property type="match status" value="1"/>
</dbReference>
<dbReference type="Pfam" id="PF05698">
    <property type="entry name" value="Trigger_C"/>
    <property type="match status" value="1"/>
</dbReference>
<dbReference type="Pfam" id="PF05697">
    <property type="entry name" value="Trigger_N"/>
    <property type="match status" value="1"/>
</dbReference>
<dbReference type="PIRSF" id="PIRSF003095">
    <property type="entry name" value="Trigger_factor"/>
    <property type="match status" value="1"/>
</dbReference>
<dbReference type="SUPFAM" id="SSF54534">
    <property type="entry name" value="FKBP-like"/>
    <property type="match status" value="1"/>
</dbReference>
<dbReference type="SUPFAM" id="SSF109998">
    <property type="entry name" value="Triger factor/SurA peptide-binding domain-like"/>
    <property type="match status" value="1"/>
</dbReference>
<dbReference type="SUPFAM" id="SSF102735">
    <property type="entry name" value="Trigger factor ribosome-binding domain"/>
    <property type="match status" value="1"/>
</dbReference>
<dbReference type="PROSITE" id="PS50059">
    <property type="entry name" value="FKBP_PPIASE"/>
    <property type="match status" value="1"/>
</dbReference>
<name>TIG_HALOH</name>